<name>VF301_ASFWA</name>
<reference key="1">
    <citation type="submission" date="2003-03" db="EMBL/GenBank/DDBJ databases">
        <title>African swine fever virus genomes.</title>
        <authorList>
            <person name="Kutish G.F."/>
            <person name="Rock D.L."/>
        </authorList>
    </citation>
    <scope>NUCLEOTIDE SEQUENCE [LARGE SCALE GENOMIC DNA]</scope>
</reference>
<feature type="chain" id="PRO_0000373633" description="Uncharacterized protein E301R">
    <location>
        <begin position="1"/>
        <end position="301"/>
    </location>
</feature>
<evidence type="ECO:0000250" key="1">
    <source>
        <dbReference type="UniProtKB" id="Q65196"/>
    </source>
</evidence>
<evidence type="ECO:0000305" key="2"/>
<protein>
    <recommendedName>
        <fullName>Uncharacterized protein E301R</fullName>
    </recommendedName>
</protein>
<organism>
    <name type="scientific">African swine fever virus (isolate Warthog/Namibia/Wart80/1980)</name>
    <name type="common">ASFV</name>
    <dbReference type="NCBI Taxonomy" id="561444"/>
    <lineage>
        <taxon>Viruses</taxon>
        <taxon>Varidnaviria</taxon>
        <taxon>Bamfordvirae</taxon>
        <taxon>Nucleocytoviricota</taxon>
        <taxon>Pokkesviricetes</taxon>
        <taxon>Asfuvirales</taxon>
        <taxon>Asfarviridae</taxon>
        <taxon>Asfivirus</taxon>
        <taxon>African swine fever virus</taxon>
    </lineage>
</organism>
<gene>
    <name type="ordered locus">War-138</name>
</gene>
<dbReference type="EMBL" id="AY261366">
    <property type="status" value="NOT_ANNOTATED_CDS"/>
    <property type="molecule type" value="Genomic_DNA"/>
</dbReference>
<dbReference type="SMR" id="P0CAD0"/>
<dbReference type="Proteomes" id="UP000000858">
    <property type="component" value="Segment"/>
</dbReference>
<dbReference type="GO" id="GO:0039548">
    <property type="term" value="P:symbiont-mediated suppression of host cytoplasmic pattern recognition receptor signaling pathway via inhibition of IRF3 activity"/>
    <property type="evidence" value="ECO:0007669"/>
    <property type="project" value="UniProtKB-KW"/>
</dbReference>
<dbReference type="Gene3D" id="3.70.10.10">
    <property type="match status" value="1"/>
</dbReference>
<dbReference type="InterPro" id="IPR046938">
    <property type="entry name" value="DNA_clamp_sf"/>
</dbReference>
<dbReference type="SUPFAM" id="SSF55979">
    <property type="entry name" value="DNA clamp"/>
    <property type="match status" value="1"/>
</dbReference>
<proteinExistence type="inferred from homology"/>
<accession>P0CAD0</accession>
<sequence length="301" mass="35284">MSEDIRRGPGRPPKKRVVPNFERKGILEKPVRPQSRLEFSYDNPLIFKNLFIYFKNLKSKNILVRCTPTEITFFSRDQSQASFVIATIDGKNVNHYYASDVFWLGINRELVEKMFNSIDRSFLKITIVHRYDKPETLFFIFTDFDIDKECTYQITVSEPELDMDLIEMEKSISEERLKNYPLRWEFTSKQLKKTFSDLSNYTELVTIEKLGGDTPLHLYFQKFNSISYHEMYKSSNKINLTSTIPKSQVFQINVKIAHIKSLASAMVTDKIRILCEENGNLIFQSEMDALMLNTITLNNMI</sequence>
<keyword id="KW-0945">Host-virus interaction</keyword>
<keyword id="KW-1090">Inhibition of host innate immune response by virus</keyword>
<keyword id="KW-1092">Inhibition of host IRF3 by virus</keyword>
<keyword id="KW-1113">Inhibition of host RLR pathway by virus</keyword>
<keyword id="KW-0426">Late protein</keyword>
<keyword id="KW-0899">Viral immunoevasion</keyword>
<organismHost>
    <name type="scientific">Ornithodoros</name>
    <name type="common">relapsing fever ticks</name>
    <dbReference type="NCBI Taxonomy" id="6937"/>
</organismHost>
<organismHost>
    <name type="scientific">Phacochoerus aethiopicus</name>
    <name type="common">Warthog</name>
    <dbReference type="NCBI Taxonomy" id="85517"/>
</organismHost>
<organismHost>
    <name type="scientific">Phacochoerus africanus</name>
    <name type="common">Warthog</name>
    <dbReference type="NCBI Taxonomy" id="41426"/>
</organismHost>
<organismHost>
    <name type="scientific">Potamochoerus larvatus</name>
    <name type="common">Bushpig</name>
    <dbReference type="NCBI Taxonomy" id="273792"/>
</organismHost>
<organismHost>
    <name type="scientific">Sus scrofa</name>
    <name type="common">Pig</name>
    <dbReference type="NCBI Taxonomy" id="9823"/>
</organismHost>
<comment type="function">
    <text evidence="1">Plays a role in the inhibition of host innate immune system by acting as a negatively regulator of type I interferon production. Mechanistically, interacts with and prevents host IRF3 nuclear localization to inhibit its transcriptional activity.</text>
</comment>
<comment type="subunit">
    <text evidence="1">Interacts with host IRF3.</text>
</comment>
<comment type="induction">
    <text evidence="2">Expressed in the late phase of the viral replicative cycle.</text>
</comment>
<comment type="similarity">
    <text evidence="2">Belongs to the asfivirus E301R family.</text>
</comment>